<accession>Q9HTH0</accession>
<gene>
    <name evidence="1" type="primary">clsA</name>
    <name type="synonym">cls</name>
    <name type="ordered locus">PA5394</name>
</gene>
<comment type="function">
    <text evidence="1">Catalyzes the reversible phosphatidyl group transfer from one phosphatidylglycerol molecule to another to form cardiolipin (CL) (diphosphatidylglycerol) and glycerol.</text>
</comment>
<comment type="catalytic activity">
    <reaction evidence="1">
        <text>2 a 1,2-diacyl-sn-glycero-3-phospho-(1'-sn-glycerol) = a cardiolipin + glycerol</text>
        <dbReference type="Rhea" id="RHEA:31451"/>
        <dbReference type="ChEBI" id="CHEBI:17754"/>
        <dbReference type="ChEBI" id="CHEBI:62237"/>
        <dbReference type="ChEBI" id="CHEBI:64716"/>
    </reaction>
</comment>
<comment type="subcellular location">
    <subcellularLocation>
        <location evidence="1">Cell inner membrane</location>
        <topology evidence="1">Multi-pass membrane protein</topology>
    </subcellularLocation>
</comment>
<comment type="similarity">
    <text evidence="1">Belongs to the phospholipase D family. Cardiolipin synthase subfamily. ClsA sub-subfamily.</text>
</comment>
<protein>
    <recommendedName>
        <fullName evidence="1">Cardiolipin synthase A</fullName>
        <shortName evidence="1">CL synthase</shortName>
        <ecNumber evidence="1">2.7.8.-</ecNumber>
    </recommendedName>
</protein>
<reference key="1">
    <citation type="journal article" date="2000" name="Nature">
        <title>Complete genome sequence of Pseudomonas aeruginosa PAO1, an opportunistic pathogen.</title>
        <authorList>
            <person name="Stover C.K."/>
            <person name="Pham X.-Q.T."/>
            <person name="Erwin A.L."/>
            <person name="Mizoguchi S.D."/>
            <person name="Warrener P."/>
            <person name="Hickey M.J."/>
            <person name="Brinkman F.S.L."/>
            <person name="Hufnagle W.O."/>
            <person name="Kowalik D.J."/>
            <person name="Lagrou M."/>
            <person name="Garber R.L."/>
            <person name="Goltry L."/>
            <person name="Tolentino E."/>
            <person name="Westbrock-Wadman S."/>
            <person name="Yuan Y."/>
            <person name="Brody L.L."/>
            <person name="Coulter S.N."/>
            <person name="Folger K.R."/>
            <person name="Kas A."/>
            <person name="Larbig K."/>
            <person name="Lim R.M."/>
            <person name="Smith K.A."/>
            <person name="Spencer D.H."/>
            <person name="Wong G.K.-S."/>
            <person name="Wu Z."/>
            <person name="Paulsen I.T."/>
            <person name="Reizer J."/>
            <person name="Saier M.H. Jr."/>
            <person name="Hancock R.E.W."/>
            <person name="Lory S."/>
            <person name="Olson M.V."/>
        </authorList>
    </citation>
    <scope>NUCLEOTIDE SEQUENCE [LARGE SCALE GENOMIC DNA]</scope>
    <source>
        <strain>ATCC 15692 / DSM 22644 / CIP 104116 / JCM 14847 / LMG 12228 / 1C / PRS 101 / PAO1</strain>
    </source>
</reference>
<name>CLSA_PSEAE</name>
<feature type="chain" id="PRO_0000201260" description="Cardiolipin synthase A">
    <location>
        <begin position="1"/>
        <end position="490"/>
    </location>
</feature>
<feature type="transmembrane region" description="Helical" evidence="1">
    <location>
        <begin position="20"/>
        <end position="40"/>
    </location>
</feature>
<feature type="transmembrane region" description="Helical" evidence="1">
    <location>
        <begin position="49"/>
        <end position="69"/>
    </location>
</feature>
<feature type="domain" description="PLD phosphodiesterase 1" evidence="1">
    <location>
        <begin position="229"/>
        <end position="256"/>
    </location>
</feature>
<feature type="domain" description="PLD phosphodiesterase 2" evidence="1">
    <location>
        <begin position="403"/>
        <end position="430"/>
    </location>
</feature>
<feature type="active site" evidence="1">
    <location>
        <position position="234"/>
    </location>
</feature>
<feature type="active site" evidence="1">
    <location>
        <position position="236"/>
    </location>
</feature>
<feature type="active site" evidence="1">
    <location>
        <position position="241"/>
    </location>
</feature>
<feature type="active site" evidence="1">
    <location>
        <position position="408"/>
    </location>
</feature>
<feature type="active site" evidence="1">
    <location>
        <position position="410"/>
    </location>
</feature>
<feature type="active site" evidence="1">
    <location>
        <position position="415"/>
    </location>
</feature>
<evidence type="ECO:0000255" key="1">
    <source>
        <dbReference type="HAMAP-Rule" id="MF_00190"/>
    </source>
</evidence>
<dbReference type="EC" id="2.7.8.-" evidence="1"/>
<dbReference type="EMBL" id="AE004091">
    <property type="protein sequence ID" value="AAG08779.1"/>
    <property type="molecule type" value="Genomic_DNA"/>
</dbReference>
<dbReference type="PIR" id="B82971">
    <property type="entry name" value="B82971"/>
</dbReference>
<dbReference type="RefSeq" id="NP_254081.1">
    <property type="nucleotide sequence ID" value="NC_002516.2"/>
</dbReference>
<dbReference type="RefSeq" id="WP_003121332.1">
    <property type="nucleotide sequence ID" value="NZ_QZGE01000031.1"/>
</dbReference>
<dbReference type="SMR" id="Q9HTH0"/>
<dbReference type="FunCoup" id="Q9HTH0">
    <property type="interactions" value="134"/>
</dbReference>
<dbReference type="STRING" id="208964.PA5394"/>
<dbReference type="PaxDb" id="208964-PA5394"/>
<dbReference type="GeneID" id="883132"/>
<dbReference type="KEGG" id="pae:PA5394"/>
<dbReference type="PATRIC" id="fig|208964.12.peg.5654"/>
<dbReference type="PseudoCAP" id="PA5394"/>
<dbReference type="HOGENOM" id="CLU_038053_1_0_6"/>
<dbReference type="InParanoid" id="Q9HTH0"/>
<dbReference type="OrthoDB" id="9762009at2"/>
<dbReference type="PhylomeDB" id="Q9HTH0"/>
<dbReference type="BioCyc" id="PAER208964:G1FZ6-5521-MONOMER"/>
<dbReference type="Proteomes" id="UP000002438">
    <property type="component" value="Chromosome"/>
</dbReference>
<dbReference type="GO" id="GO:0016020">
    <property type="term" value="C:membrane"/>
    <property type="evidence" value="ECO:0000318"/>
    <property type="project" value="GO_Central"/>
</dbReference>
<dbReference type="GO" id="GO:0005886">
    <property type="term" value="C:plasma membrane"/>
    <property type="evidence" value="ECO:0007669"/>
    <property type="project" value="UniProtKB-SubCell"/>
</dbReference>
<dbReference type="GO" id="GO:0008808">
    <property type="term" value="F:cardiolipin synthase activity"/>
    <property type="evidence" value="ECO:0000318"/>
    <property type="project" value="GO_Central"/>
</dbReference>
<dbReference type="GO" id="GO:0032049">
    <property type="term" value="P:cardiolipin biosynthetic process"/>
    <property type="evidence" value="ECO:0000318"/>
    <property type="project" value="GO_Central"/>
</dbReference>
<dbReference type="CDD" id="cd09155">
    <property type="entry name" value="PLDc_PaCLS_like_1"/>
    <property type="match status" value="1"/>
</dbReference>
<dbReference type="CDD" id="cd09161">
    <property type="entry name" value="PLDc_PaCLS_like_2"/>
    <property type="match status" value="1"/>
</dbReference>
<dbReference type="FunFam" id="3.30.870.10:FF:000014">
    <property type="entry name" value="Cardiolipin synthase"/>
    <property type="match status" value="1"/>
</dbReference>
<dbReference type="FunFam" id="3.30.870.10:FF:000021">
    <property type="entry name" value="Cardiolipin synthase"/>
    <property type="match status" value="1"/>
</dbReference>
<dbReference type="Gene3D" id="3.30.870.10">
    <property type="entry name" value="Endonuclease Chain A"/>
    <property type="match status" value="2"/>
</dbReference>
<dbReference type="HAMAP" id="MF_00190">
    <property type="entry name" value="Cardiolipin_synth_ClsA"/>
    <property type="match status" value="1"/>
</dbReference>
<dbReference type="InterPro" id="IPR022924">
    <property type="entry name" value="Cardiolipin_synthase"/>
</dbReference>
<dbReference type="InterPro" id="IPR030840">
    <property type="entry name" value="CL_synthase_A"/>
</dbReference>
<dbReference type="InterPro" id="IPR025202">
    <property type="entry name" value="PLD-like_dom"/>
</dbReference>
<dbReference type="InterPro" id="IPR001736">
    <property type="entry name" value="PLipase_D/transphosphatidylase"/>
</dbReference>
<dbReference type="NCBIfam" id="TIGR04265">
    <property type="entry name" value="bac_cardiolipin"/>
    <property type="match status" value="1"/>
</dbReference>
<dbReference type="PANTHER" id="PTHR21248">
    <property type="entry name" value="CARDIOLIPIN SYNTHASE"/>
    <property type="match status" value="1"/>
</dbReference>
<dbReference type="PANTHER" id="PTHR21248:SF22">
    <property type="entry name" value="PHOSPHOLIPASE D"/>
    <property type="match status" value="1"/>
</dbReference>
<dbReference type="Pfam" id="PF13091">
    <property type="entry name" value="PLDc_2"/>
    <property type="match status" value="1"/>
</dbReference>
<dbReference type="SMART" id="SM00155">
    <property type="entry name" value="PLDc"/>
    <property type="match status" value="2"/>
</dbReference>
<dbReference type="SUPFAM" id="SSF56024">
    <property type="entry name" value="Phospholipase D/nuclease"/>
    <property type="match status" value="2"/>
</dbReference>
<dbReference type="PROSITE" id="PS50035">
    <property type="entry name" value="PLD"/>
    <property type="match status" value="2"/>
</dbReference>
<sequence>MAATGVDKDRPRAMTSTTYLGLLLVGIQVLGFVAAIHAVLTVRTAQGAIAWATSLVFMPYLTLLPYLVFGRSRFDAYIEARRQANREMHLAAAELDWRPWVEEALAARQVSGYKGLKALVRMTRTPTLANNRVRLLVNGEASFEAMFKAISAARQVILVQFFIVRDDALGQRLQQLLLERAANGVEVFFLYDAIGSHALPHRYVERLRQGGVQMHGFSTGSGMLNRFQVNFRNHRKVVVVDGECGFVGGHNVGVEYLGEKPPLAPWRDTHMELRGPAVACLQESFAEDWYWATHSLPPLILPPQYDSEGALCQVVASGPADAQETCSLFFVEMINAAHERVWITSPYFVPDEAVMAALRLAVLRGVDVRLLIPSRPDHRTVYAASSLYALEAIRAGVKVFRYQPGFLHQKVVLVDRDTAAVGSANLDNRSFRLNFEVMVVTVDEGFAGEVEAMLEADFAESLEFTPEDRRSVRRLQQLGMRVARLVSPIL</sequence>
<proteinExistence type="inferred from homology"/>
<keyword id="KW-0997">Cell inner membrane</keyword>
<keyword id="KW-1003">Cell membrane</keyword>
<keyword id="KW-0444">Lipid biosynthesis</keyword>
<keyword id="KW-0443">Lipid metabolism</keyword>
<keyword id="KW-0472">Membrane</keyword>
<keyword id="KW-0594">Phospholipid biosynthesis</keyword>
<keyword id="KW-1208">Phospholipid metabolism</keyword>
<keyword id="KW-1185">Reference proteome</keyword>
<keyword id="KW-0677">Repeat</keyword>
<keyword id="KW-0808">Transferase</keyword>
<keyword id="KW-0812">Transmembrane</keyword>
<keyword id="KW-1133">Transmembrane helix</keyword>
<organism>
    <name type="scientific">Pseudomonas aeruginosa (strain ATCC 15692 / DSM 22644 / CIP 104116 / JCM 14847 / LMG 12228 / 1C / PRS 101 / PAO1)</name>
    <dbReference type="NCBI Taxonomy" id="208964"/>
    <lineage>
        <taxon>Bacteria</taxon>
        <taxon>Pseudomonadati</taxon>
        <taxon>Pseudomonadota</taxon>
        <taxon>Gammaproteobacteria</taxon>
        <taxon>Pseudomonadales</taxon>
        <taxon>Pseudomonadaceae</taxon>
        <taxon>Pseudomonas</taxon>
    </lineage>
</organism>